<accession>B5FW36</accession>
<reference key="1">
    <citation type="submission" date="2011-03" db="EMBL/GenBank/DDBJ databases">
        <title>Version 3 of the genome sequence of Otolemur garnettii(Bushbaby).</title>
        <authorList>
            <consortium name="The Broad Institute Genome Sequencing Platform"/>
            <person name="Di Palma F."/>
            <person name="Johnson J."/>
            <person name="Lander E.S."/>
            <person name="Lindblad-Toh K."/>
            <person name="Jaffe D.B."/>
            <person name="Gnerre S."/>
            <person name="MacCallum I."/>
            <person name="Przybylski D."/>
            <person name="Ribeiro F.J."/>
            <person name="Burton J.N."/>
            <person name="Walker B.J."/>
            <person name="Sharpe T."/>
            <person name="Hall G."/>
        </authorList>
    </citation>
    <scope>NUCLEOTIDE SEQUENCE [LARGE SCALE GENOMIC DNA]</scope>
</reference>
<organism>
    <name type="scientific">Otolemur garnettii</name>
    <name type="common">Small-eared galago</name>
    <name type="synonym">Garnett's greater bushbaby</name>
    <dbReference type="NCBI Taxonomy" id="30611"/>
    <lineage>
        <taxon>Eukaryota</taxon>
        <taxon>Metazoa</taxon>
        <taxon>Chordata</taxon>
        <taxon>Craniata</taxon>
        <taxon>Vertebrata</taxon>
        <taxon>Euteleostomi</taxon>
        <taxon>Mammalia</taxon>
        <taxon>Eutheria</taxon>
        <taxon>Euarchontoglires</taxon>
        <taxon>Primates</taxon>
        <taxon>Strepsirrhini</taxon>
        <taxon>Lorisiformes</taxon>
        <taxon>Galagidae</taxon>
        <taxon>Otolemur</taxon>
    </lineage>
</organism>
<name>SETD3_OTOGA</name>
<gene>
    <name evidence="1" type="primary">SETD3</name>
</gene>
<dbReference type="EC" id="2.1.1.85" evidence="1"/>
<dbReference type="EMBL" id="DP000890">
    <property type="protein sequence ID" value="ACH53017.1"/>
    <property type="molecule type" value="Genomic_DNA"/>
</dbReference>
<dbReference type="SMR" id="B5FW36"/>
<dbReference type="FunCoup" id="B5FW36">
    <property type="interactions" value="3115"/>
</dbReference>
<dbReference type="STRING" id="30611.ENSOGAP00000003038"/>
<dbReference type="eggNOG" id="KOG1337">
    <property type="taxonomic scope" value="Eukaryota"/>
</dbReference>
<dbReference type="InParanoid" id="B5FW36"/>
<dbReference type="Proteomes" id="UP000005225">
    <property type="component" value="Unassembled WGS sequence"/>
</dbReference>
<dbReference type="GO" id="GO:0005737">
    <property type="term" value="C:cytoplasm"/>
    <property type="evidence" value="ECO:0000250"/>
    <property type="project" value="UniProtKB"/>
</dbReference>
<dbReference type="GO" id="GO:0005634">
    <property type="term" value="C:nucleus"/>
    <property type="evidence" value="ECO:0007669"/>
    <property type="project" value="UniProtKB-SubCell"/>
</dbReference>
<dbReference type="GO" id="GO:0003779">
    <property type="term" value="F:actin binding"/>
    <property type="evidence" value="ECO:0007669"/>
    <property type="project" value="UniProtKB-KW"/>
</dbReference>
<dbReference type="GO" id="GO:0046975">
    <property type="term" value="F:histone H3K36 methyltransferase activity"/>
    <property type="evidence" value="ECO:0000250"/>
    <property type="project" value="UniProtKB"/>
</dbReference>
<dbReference type="GO" id="GO:0018064">
    <property type="term" value="F:protein-L-histidine N-tele-methyltransferase activity"/>
    <property type="evidence" value="ECO:0000250"/>
    <property type="project" value="UniProtKB"/>
</dbReference>
<dbReference type="GO" id="GO:0003713">
    <property type="term" value="F:transcription coactivator activity"/>
    <property type="evidence" value="ECO:0000250"/>
    <property type="project" value="UniProtKB"/>
</dbReference>
<dbReference type="GO" id="GO:0030047">
    <property type="term" value="P:actin modification"/>
    <property type="evidence" value="ECO:0000250"/>
    <property type="project" value="UniProtKB"/>
</dbReference>
<dbReference type="GO" id="GO:0018021">
    <property type="term" value="P:peptidyl-histidine methylation"/>
    <property type="evidence" value="ECO:0000250"/>
    <property type="project" value="UniProtKB"/>
</dbReference>
<dbReference type="GO" id="GO:0045893">
    <property type="term" value="P:positive regulation of DNA-templated transcription"/>
    <property type="evidence" value="ECO:0000250"/>
    <property type="project" value="UniProtKB"/>
</dbReference>
<dbReference type="GO" id="GO:0070472">
    <property type="term" value="P:regulation of uterine smooth muscle contraction"/>
    <property type="evidence" value="ECO:0000250"/>
    <property type="project" value="UniProtKB"/>
</dbReference>
<dbReference type="CDD" id="cd19176">
    <property type="entry name" value="SET_SETD3"/>
    <property type="match status" value="1"/>
</dbReference>
<dbReference type="FunFam" id="3.90.1410.10:FF:000001">
    <property type="entry name" value="histone-lysine N-methyltransferase setd3 isoform X1"/>
    <property type="match status" value="1"/>
</dbReference>
<dbReference type="FunFam" id="3.90.1420.10:FF:000001">
    <property type="entry name" value="histone-lysine N-methyltransferase setd3 isoform X1"/>
    <property type="match status" value="1"/>
</dbReference>
<dbReference type="Gene3D" id="3.90.1420.10">
    <property type="entry name" value="Rubisco LSMT, substrate-binding domain"/>
    <property type="match status" value="1"/>
</dbReference>
<dbReference type="Gene3D" id="3.90.1410.10">
    <property type="entry name" value="set domain protein methyltransferase, domain 1"/>
    <property type="match status" value="1"/>
</dbReference>
<dbReference type="InterPro" id="IPR015353">
    <property type="entry name" value="Rubisco_LSMT_subst-bd"/>
</dbReference>
<dbReference type="InterPro" id="IPR036464">
    <property type="entry name" value="Rubisco_LSMT_subst-bd_sf"/>
</dbReference>
<dbReference type="InterPro" id="IPR001214">
    <property type="entry name" value="SET_dom"/>
</dbReference>
<dbReference type="InterPro" id="IPR046341">
    <property type="entry name" value="SET_dom_sf"/>
</dbReference>
<dbReference type="InterPro" id="IPR025785">
    <property type="entry name" value="SETD3"/>
</dbReference>
<dbReference type="InterPro" id="IPR044428">
    <property type="entry name" value="SETD3_SET"/>
</dbReference>
<dbReference type="InterPro" id="IPR050600">
    <property type="entry name" value="SETD3_SETD6_MTase"/>
</dbReference>
<dbReference type="PANTHER" id="PTHR13271:SF47">
    <property type="entry name" value="ACTIN-HISTIDINE N-METHYLTRANSFERASE"/>
    <property type="match status" value="1"/>
</dbReference>
<dbReference type="PANTHER" id="PTHR13271">
    <property type="entry name" value="UNCHARACTERIZED PUTATIVE METHYLTRANSFERASE"/>
    <property type="match status" value="1"/>
</dbReference>
<dbReference type="Pfam" id="PF09273">
    <property type="entry name" value="Rubis-subs-bind"/>
    <property type="match status" value="1"/>
</dbReference>
<dbReference type="Pfam" id="PF00856">
    <property type="entry name" value="SET"/>
    <property type="match status" value="1"/>
</dbReference>
<dbReference type="SUPFAM" id="SSF81822">
    <property type="entry name" value="RuBisCo LSMT C-terminal, substrate-binding domain"/>
    <property type="match status" value="1"/>
</dbReference>
<dbReference type="SUPFAM" id="SSF82199">
    <property type="entry name" value="SET domain"/>
    <property type="match status" value="1"/>
</dbReference>
<dbReference type="PROSITE" id="PS51565">
    <property type="entry name" value="SAM_MT85_SETD3"/>
    <property type="match status" value="1"/>
</dbReference>
<dbReference type="PROSITE" id="PS50280">
    <property type="entry name" value="SET"/>
    <property type="match status" value="1"/>
</dbReference>
<proteinExistence type="inferred from homology"/>
<evidence type="ECO:0000250" key="1">
    <source>
        <dbReference type="UniProtKB" id="Q86TU7"/>
    </source>
</evidence>
<evidence type="ECO:0000250" key="2">
    <source>
        <dbReference type="UniProtKB" id="Q91WC0"/>
    </source>
</evidence>
<evidence type="ECO:0000255" key="3">
    <source>
        <dbReference type="PROSITE-ProRule" id="PRU00190"/>
    </source>
</evidence>
<evidence type="ECO:0000255" key="4">
    <source>
        <dbReference type="PROSITE-ProRule" id="PRU00898"/>
    </source>
</evidence>
<evidence type="ECO:0000256" key="5">
    <source>
        <dbReference type="SAM" id="MobiDB-lite"/>
    </source>
</evidence>
<evidence type="ECO:0000305" key="6"/>
<keyword id="KW-0009">Actin-binding</keyword>
<keyword id="KW-0963">Cytoplasm</keyword>
<keyword id="KW-0489">Methyltransferase</keyword>
<keyword id="KW-0539">Nucleus</keyword>
<keyword id="KW-0597">Phosphoprotein</keyword>
<keyword id="KW-1185">Reference proteome</keyword>
<keyword id="KW-0949">S-adenosyl-L-methionine</keyword>
<keyword id="KW-0808">Transferase</keyword>
<keyword id="KW-0832">Ubl conjugation</keyword>
<sequence>MGKKSRVKTQKSGTGATATVSPKEILNLTSELLQKCSSPAPGPGKEWEEYVQIRSLVEKIRKKQKGLSITFDGKRENYFPDLMKWASENGASVEGFEMVNFKEEGFGLRATRDIKAEELFLWVPRKLLMTVESAKNSVLGPLYSQDRILQAMGNIALAFHLLCERASPNSFWQPYIQSLPSEYDTPLYFEEDEVRYLQSTQAIHDVFSQYKNTARQYAYFYKVIQTHPHANKLPLKDSFTYEDYRWAVSSVMTRQNQIPTEDGSRVTLALIPLWDMCNHTNGLITTGYNLEDDRCECVALQDFRAGEQIYIFYGTRSNAEFVIHSGFFFDNNSHDRVKIKLGVSKSDRLYAMKAEVLARAGIPTSSVFALHFTEPPISAQLLAFLRVFCMTEEELKEHLLGDNAIDRIFTLGNSEFPVSWDNEVKLWTFLEDRASLLLKTYKTTIEEDKFVLKNHDLSVRATMAIKLRLGEKEILEKAVKSAAVNREYYRKQMEEKAPLPKYEESNLGLLESSVGDSRLPLVLRNLEEEAGVQEALNIKEAISKAEATENGLVNGENCIPNGTRSENEDLNQEENKRAVEDAKGSSSDSTDAVKK</sequence>
<protein>
    <recommendedName>
        <fullName evidence="1">Actin-histidine N-methyltransferase</fullName>
        <ecNumber evidence="1">2.1.1.85</ecNumber>
    </recommendedName>
    <alternativeName>
        <fullName evidence="6">Protein-L-histidine N-tele-methyltransferase</fullName>
    </alternativeName>
    <alternativeName>
        <fullName evidence="6">SET domain-containing protein 3</fullName>
    </alternativeName>
</protein>
<comment type="function">
    <text evidence="1">Protein-histidine N-methyltransferase that specifically mediates 3-methylhistidine (tele-methylhistidine) methylation of actin at 'His-73'. Histidine methylation of actin is required for smooth muscle contraction of the laboring uterus during delivery. Does not have protein-lysine N-methyltransferase activity and probably only catalyzes histidine methylation of actin.</text>
</comment>
<comment type="catalytic activity">
    <reaction evidence="1">
        <text>L-histidyl-[protein] + S-adenosyl-L-methionine = N(tele)-methyl-L-histidyl-[protein] + S-adenosyl-L-homocysteine + H(+)</text>
        <dbReference type="Rhea" id="RHEA:19369"/>
        <dbReference type="Rhea" id="RHEA-COMP:9745"/>
        <dbReference type="Rhea" id="RHEA-COMP:11600"/>
        <dbReference type="ChEBI" id="CHEBI:15378"/>
        <dbReference type="ChEBI" id="CHEBI:16367"/>
        <dbReference type="ChEBI" id="CHEBI:29979"/>
        <dbReference type="ChEBI" id="CHEBI:57856"/>
        <dbReference type="ChEBI" id="CHEBI:59789"/>
        <dbReference type="EC" id="2.1.1.85"/>
    </reaction>
</comment>
<comment type="subunit">
    <text evidence="2">Interacts with MYOD1.</text>
</comment>
<comment type="subcellular location">
    <subcellularLocation>
        <location evidence="1">Cytoplasm</location>
    </subcellularLocation>
    <subcellularLocation>
        <location evidence="1">Nucleus</location>
    </subcellularLocation>
    <text evidence="1">Localizes mainly in the cytoplasm.</text>
</comment>
<comment type="domain">
    <text evidence="1">The SET domain specifically recognizes and binds actin, suggesting that it does not accommodate substrates diverging from actin.</text>
</comment>
<comment type="PTM">
    <text evidence="1">Phosphorylated by GSK3B, which is required for recognition by the SCF(FBXW7) complex and subsequent degradation.</text>
</comment>
<comment type="PTM">
    <text evidence="1">Ubiquitinated by the SCF(FBXW7) complex following phosphorylation by GSK3B, leading to its degradation by the proteasome.</text>
</comment>
<comment type="similarity">
    <text evidence="4">Belongs to the class V-like SAM-binding methyltransferase superfamily. SETD3 actin-histidine methyltransferase family.</text>
</comment>
<feature type="chain" id="PRO_0000408340" description="Actin-histidine N-methyltransferase">
    <location>
        <begin position="1"/>
        <end position="595"/>
    </location>
</feature>
<feature type="domain" description="SET" evidence="3">
    <location>
        <begin position="94"/>
        <end position="314"/>
    </location>
</feature>
<feature type="region of interest" description="Disordered" evidence="5">
    <location>
        <begin position="1"/>
        <end position="22"/>
    </location>
</feature>
<feature type="region of interest" description="Disordered" evidence="5">
    <location>
        <begin position="552"/>
        <end position="595"/>
    </location>
</feature>
<feature type="compositionally biased region" description="Polar residues" evidence="5">
    <location>
        <begin position="10"/>
        <end position="20"/>
    </location>
</feature>
<feature type="compositionally biased region" description="Basic and acidic residues" evidence="5">
    <location>
        <begin position="573"/>
        <end position="583"/>
    </location>
</feature>
<feature type="compositionally biased region" description="Polar residues" evidence="5">
    <location>
        <begin position="584"/>
        <end position="595"/>
    </location>
</feature>
<feature type="binding site" evidence="1">
    <location>
        <position position="75"/>
    </location>
    <ligand>
        <name>S-adenosyl-L-methionine</name>
        <dbReference type="ChEBI" id="CHEBI:59789"/>
    </ligand>
</feature>
<feature type="binding site" evidence="1">
    <location>
        <begin position="104"/>
        <end position="106"/>
    </location>
    <ligand>
        <name>S-adenosyl-L-methionine</name>
        <dbReference type="ChEBI" id="CHEBI:59789"/>
    </ligand>
</feature>
<feature type="binding site" evidence="1">
    <location>
        <position position="254"/>
    </location>
    <ligand>
        <name>S-adenosyl-L-methionine</name>
        <dbReference type="ChEBI" id="CHEBI:59789"/>
    </ligand>
</feature>
<feature type="binding site" evidence="1">
    <location>
        <begin position="275"/>
        <end position="279"/>
    </location>
    <ligand>
        <name>S-adenosyl-L-methionine</name>
        <dbReference type="ChEBI" id="CHEBI:59789"/>
    </ligand>
</feature>
<feature type="binding site" evidence="1">
    <location>
        <begin position="325"/>
        <end position="327"/>
    </location>
    <ligand>
        <name>S-adenosyl-L-methionine</name>
        <dbReference type="ChEBI" id="CHEBI:59789"/>
    </ligand>
</feature>
<feature type="modified residue" description="Phosphoserine" evidence="1">
    <location>
        <position position="513"/>
    </location>
</feature>